<evidence type="ECO:0000250" key="1"/>
<evidence type="ECO:0000250" key="2">
    <source>
        <dbReference type="UniProtKB" id="Q16288"/>
    </source>
</evidence>
<evidence type="ECO:0000255" key="3"/>
<evidence type="ECO:0000255" key="4">
    <source>
        <dbReference type="PROSITE-ProRule" id="PRU00114"/>
    </source>
</evidence>
<evidence type="ECO:0000255" key="5">
    <source>
        <dbReference type="PROSITE-ProRule" id="PRU00159"/>
    </source>
</evidence>
<evidence type="ECO:0000255" key="6">
    <source>
        <dbReference type="PROSITE-ProRule" id="PRU10028"/>
    </source>
</evidence>
<evidence type="ECO:0000269" key="7">
    <source>
    </source>
</evidence>
<evidence type="ECO:0000269" key="8">
    <source>
    </source>
</evidence>
<evidence type="ECO:0000269" key="9">
    <source>
    </source>
</evidence>
<evidence type="ECO:0000303" key="10">
    <source>
    </source>
</evidence>
<evidence type="ECO:0000303" key="11">
    <source>
    </source>
</evidence>
<evidence type="ECO:0000305" key="12"/>
<evidence type="ECO:0007744" key="13">
    <source>
        <dbReference type="PDB" id="4PBV"/>
    </source>
</evidence>
<evidence type="ECO:0007744" key="14">
    <source>
        <dbReference type="PDB" id="4PBW"/>
    </source>
</evidence>
<evidence type="ECO:0007829" key="15">
    <source>
        <dbReference type="PDB" id="4PBV"/>
    </source>
</evidence>
<evidence type="ECO:0007829" key="16">
    <source>
        <dbReference type="PDB" id="4PBW"/>
    </source>
</evidence>
<gene>
    <name type="primary">NTRK3</name>
    <name type="synonym">TRKC</name>
</gene>
<feature type="signal peptide" evidence="1">
    <location>
        <begin position="1"/>
        <end position="31"/>
    </location>
</feature>
<feature type="chain" id="PRO_0000016736" description="NT-3 growth factor receptor">
    <location>
        <begin position="32"/>
        <end position="827"/>
    </location>
</feature>
<feature type="topological domain" description="Extracellular" evidence="3">
    <location>
        <begin position="32"/>
        <end position="430"/>
    </location>
</feature>
<feature type="transmembrane region" description="Helical" evidence="3">
    <location>
        <begin position="431"/>
        <end position="455"/>
    </location>
</feature>
<feature type="topological domain" description="Cytoplasmic" evidence="3">
    <location>
        <begin position="456"/>
        <end position="827"/>
    </location>
</feature>
<feature type="repeat" description="LRR 1">
    <location>
        <begin position="104"/>
        <end position="125"/>
    </location>
</feature>
<feature type="repeat" description="LRR 2">
    <location>
        <begin position="128"/>
        <end position="149"/>
    </location>
</feature>
<feature type="domain" description="LRRCT">
    <location>
        <begin position="160"/>
        <end position="209"/>
    </location>
</feature>
<feature type="domain" description="Ig-like C2-type 1">
    <location>
        <begin position="210"/>
        <end position="300"/>
    </location>
</feature>
<feature type="domain" description="Ig-like C2-type 2">
    <location>
        <begin position="319"/>
        <end position="382"/>
    </location>
</feature>
<feature type="domain" description="Protein kinase" evidence="5">
    <location>
        <begin position="540"/>
        <end position="812"/>
    </location>
</feature>
<feature type="active site" description="Proton acceptor" evidence="5 6">
    <location>
        <position position="681"/>
    </location>
</feature>
<feature type="binding site" evidence="5">
    <location>
        <begin position="546"/>
        <end position="554"/>
    </location>
    <ligand>
        <name>ATP</name>
        <dbReference type="ChEBI" id="CHEBI:30616"/>
    </ligand>
</feature>
<feature type="binding site" evidence="5">
    <location>
        <position position="574"/>
    </location>
    <ligand>
        <name>ATP</name>
        <dbReference type="ChEBI" id="CHEBI:30616"/>
    </ligand>
</feature>
<feature type="site" description="Interaction with SHC1" evidence="1">
    <location>
        <position position="518"/>
    </location>
</feature>
<feature type="site" description="Interaction with PLC-gamma-1" evidence="1">
    <location>
        <position position="822"/>
    </location>
</feature>
<feature type="modified residue" description="Phosphotyrosine; by autocatalysis" evidence="1">
    <location>
        <position position="518"/>
    </location>
</feature>
<feature type="modified residue" description="Phosphotyrosine; by autocatalysis" evidence="1">
    <location>
        <position position="707"/>
    </location>
</feature>
<feature type="modified residue" description="Phosphotyrosine; by autocatalysis" evidence="1">
    <location>
        <position position="711"/>
    </location>
</feature>
<feature type="modified residue" description="Phosphotyrosine; by autocatalysis" evidence="1">
    <location>
        <position position="712"/>
    </location>
</feature>
<feature type="modified residue" description="Phosphotyrosine; by autocatalysis" evidence="1">
    <location>
        <position position="822"/>
    </location>
</feature>
<feature type="glycosylation site" description="N-linked (GlcNAc...) asparagine" evidence="3">
    <location>
        <position position="68"/>
    </location>
</feature>
<feature type="glycosylation site" description="N-linked (GlcNAc...) asparagine" evidence="3">
    <location>
        <position position="72"/>
    </location>
</feature>
<feature type="glycosylation site" description="N-linked (GlcNAc...) asparagine" evidence="14">
    <location>
        <position position="79"/>
    </location>
</feature>
<feature type="glycosylation site" description="N-linked (GlcNAc...) asparagine" evidence="3">
    <location>
        <position position="163"/>
    </location>
</feature>
<feature type="glycosylation site" description="N-linked (GlcNAc...) asparagine" evidence="13">
    <location>
        <position position="203"/>
    </location>
</feature>
<feature type="glycosylation site" description="N-linked (GlcNAc...) asparagine" evidence="3">
    <location>
        <position position="218"/>
    </location>
</feature>
<feature type="glycosylation site" description="N-linked (GlcNAc...) asparagine" evidence="3">
    <location>
        <position position="232"/>
    </location>
</feature>
<feature type="glycosylation site" description="N-linked (GlcNAc...) asparagine" evidence="3">
    <location>
        <position position="259"/>
    </location>
</feature>
<feature type="glycosylation site" description="N-linked (GlcNAc...) asparagine" evidence="3">
    <location>
        <position position="267"/>
    </location>
</feature>
<feature type="glycosylation site" description="N-linked (GlcNAc...) asparagine" evidence="13">
    <location>
        <position position="272"/>
    </location>
</feature>
<feature type="glycosylation site" description="N-linked (GlcNAc...) asparagine" evidence="3">
    <location>
        <position position="294"/>
    </location>
</feature>
<feature type="glycosylation site" description="N-linked (GlcNAc...) asparagine" evidence="3">
    <location>
        <position position="375"/>
    </location>
</feature>
<feature type="glycosylation site" description="N-linked (GlcNAc...) asparagine" evidence="3">
    <location>
        <position position="388"/>
    </location>
</feature>
<feature type="disulfide bond" evidence="13 14">
    <location>
        <begin position="32"/>
        <end position="38"/>
    </location>
</feature>
<feature type="disulfide bond" evidence="13 14">
    <location>
        <begin position="36"/>
        <end position="45"/>
    </location>
</feature>
<feature type="disulfide bond" evidence="13 14">
    <location>
        <begin position="164"/>
        <end position="189"/>
    </location>
</feature>
<feature type="disulfide bond" evidence="13 14">
    <location>
        <begin position="166"/>
        <end position="207"/>
    </location>
</feature>
<feature type="disulfide bond" evidence="13 14">
    <location>
        <begin position="231"/>
        <end position="284"/>
    </location>
</feature>
<feature type="disulfide bond" evidence="4">
    <location>
        <begin position="320"/>
        <end position="362"/>
    </location>
</feature>
<feature type="splice variant" id="VSP_002938" description="In isoform Beta-KD." evidence="10">
    <location>
        <begin position="1"/>
        <end position="98"/>
    </location>
</feature>
<feature type="splice variant" id="VSP_002939" description="In isoform Alpha-KD and isoform Beta-KD." evidence="10">
    <original>LAARKDFQREAELLTNLQHEHIVKFYGVCGDGDPLIMVF</original>
    <variation>CFREIMLNPISLPGHSKPLNQGIYVEDVSVYFSKGRHGF</variation>
    <location>
        <begin position="581"/>
        <end position="619"/>
    </location>
</feature>
<feature type="splice variant" id="VSP_002941" description="In isoform TRKC-3." evidence="11">
    <original>LAARKDFQREAELLTNLQH</original>
    <variation>CFREIMLNPISLPGHCQTS</variation>
    <location>
        <begin position="581"/>
        <end position="599"/>
    </location>
</feature>
<feature type="splice variant" id="VSP_002942" description="In isoform TRKC-3." evidence="11">
    <location>
        <begin position="600"/>
        <end position="827"/>
    </location>
</feature>
<feature type="splice variant" id="VSP_002940" description="In isoform Alpha-KD and isoform Beta-KD." evidence="10">
    <location>
        <begin position="620"/>
        <end position="827"/>
    </location>
</feature>
<feature type="splice variant" id="VSP_002943" description="In isoform Alpha-KT." evidence="10">
    <original>AHGPDAMILVDGQPRQAKGELGLSQMLHIASQ</original>
    <variation>LEDTPCCLSAGCLRRASCTGSSQRRVTSGASG</variation>
    <location>
        <begin position="633"/>
        <end position="664"/>
    </location>
</feature>
<feature type="splice variant" id="VSP_002944" description="In isoform Alpha-KT." evidence="10">
    <location>
        <begin position="665"/>
        <end position="827"/>
    </location>
</feature>
<feature type="splice variant" id="VSP_002945" description="In isoform KI25." evidence="10">
    <original>R</original>
    <variation>REGPRPKGQLSTAWQRHRLAPPAAAT</variation>
    <location>
        <position position="713"/>
    </location>
</feature>
<feature type="sequence conflict" description="In Ref. 2." evidence="12" ref="2">
    <original>MDVSLCPTKCTFWRVFLLWSIWGDYLLSVLACPANCLCS</original>
    <variation>MHFICWRIFASDRLKVLF</variation>
    <location>
        <begin position="1"/>
        <end position="39"/>
    </location>
</feature>
<feature type="sequence conflict" description="In Ref. 2; CAA42202." evidence="12" ref="2">
    <original>A</original>
    <variation>G</variation>
    <location>
        <position position="124"/>
    </location>
</feature>
<feature type="sequence conflict" description="In Ref. 3; CAA82907." evidence="12" ref="3">
    <original>I</original>
    <variation>F</variation>
    <location>
        <position position="378"/>
    </location>
</feature>
<feature type="sequence conflict" description="In Ref. 2; CAA42202." evidence="12" ref="2">
    <original>SPLHHINHGITTPSSL</original>
    <variation>ATHTSTTDTRFVT</variation>
    <location>
        <begin position="481"/>
        <end position="496"/>
    </location>
</feature>
<feature type="sequence conflict" description="In Ref. 2; CAA42202." evidence="12" ref="2">
    <original>W</original>
    <variation>C</variation>
    <location>
        <position position="795"/>
    </location>
</feature>
<feature type="strand" evidence="15">
    <location>
        <begin position="40"/>
        <end position="45"/>
    </location>
</feature>
<feature type="helix" evidence="15">
    <location>
        <begin position="60"/>
        <end position="62"/>
    </location>
</feature>
<feature type="helix" evidence="16">
    <location>
        <begin position="70"/>
        <end position="78"/>
    </location>
</feature>
<feature type="strand" evidence="15">
    <location>
        <begin position="82"/>
        <end position="86"/>
    </location>
</feature>
<feature type="helix" evidence="15">
    <location>
        <begin position="96"/>
        <end position="99"/>
    </location>
</feature>
<feature type="strand" evidence="15">
    <location>
        <begin position="107"/>
        <end position="113"/>
    </location>
</feature>
<feature type="turn" evidence="15">
    <location>
        <begin position="120"/>
        <end position="125"/>
    </location>
</feature>
<feature type="strand" evidence="15">
    <location>
        <begin position="131"/>
        <end position="133"/>
    </location>
</feature>
<feature type="helix" evidence="15">
    <location>
        <begin position="144"/>
        <end position="147"/>
    </location>
</feature>
<feature type="strand" evidence="15">
    <location>
        <begin position="153"/>
        <end position="156"/>
    </location>
</feature>
<feature type="helix" evidence="15">
    <location>
        <begin position="166"/>
        <end position="168"/>
    </location>
</feature>
<feature type="helix" evidence="15">
    <location>
        <begin position="169"/>
        <end position="177"/>
    </location>
</feature>
<feature type="helix" evidence="15">
    <location>
        <begin position="179"/>
        <end position="184"/>
    </location>
</feature>
<feature type="strand" evidence="15">
    <location>
        <begin position="188"/>
        <end position="190"/>
    </location>
</feature>
<feature type="strand" evidence="15">
    <location>
        <begin position="196"/>
        <end position="198"/>
    </location>
</feature>
<feature type="helix" evidence="15">
    <location>
        <begin position="199"/>
        <end position="201"/>
    </location>
</feature>
<feature type="strand" evidence="15">
    <location>
        <begin position="211"/>
        <end position="215"/>
    </location>
</feature>
<feature type="strand" evidence="15">
    <location>
        <begin position="217"/>
        <end position="222"/>
    </location>
</feature>
<feature type="strand" evidence="15">
    <location>
        <begin position="227"/>
        <end position="237"/>
    </location>
</feature>
<feature type="strand" evidence="15">
    <location>
        <begin position="240"/>
        <end position="243"/>
    </location>
</feature>
<feature type="strand" evidence="15">
    <location>
        <begin position="250"/>
        <end position="256"/>
    </location>
</feature>
<feature type="strand" evidence="15">
    <location>
        <begin position="263"/>
        <end position="272"/>
    </location>
</feature>
<feature type="helix" evidence="15">
    <location>
        <begin position="275"/>
        <end position="277"/>
    </location>
</feature>
<feature type="strand" evidence="15">
    <location>
        <begin position="281"/>
        <end position="287"/>
    </location>
</feature>
<feature type="strand" evidence="15">
    <location>
        <begin position="292"/>
        <end position="302"/>
    </location>
</feature>
<dbReference type="EC" id="2.7.10.1"/>
<dbReference type="EMBL" id="S74248">
    <property type="protein sequence ID" value="AAB31699.1"/>
    <property type="molecule type" value="mRNA"/>
</dbReference>
<dbReference type="EMBL" id="X59669">
    <property type="protein sequence ID" value="CAA42202.1"/>
    <property type="molecule type" value="mRNA"/>
</dbReference>
<dbReference type="EMBL" id="Z30091">
    <property type="protein sequence ID" value="CAA82907.1"/>
    <property type="molecule type" value="mRNA"/>
</dbReference>
<dbReference type="PIR" id="I51222">
    <property type="entry name" value="I51222"/>
</dbReference>
<dbReference type="PIR" id="I51259">
    <property type="entry name" value="I51259"/>
</dbReference>
<dbReference type="PIR" id="S35695">
    <property type="entry name" value="S35695"/>
</dbReference>
<dbReference type="RefSeq" id="NP_990500.1">
    <property type="nucleotide sequence ID" value="NM_205169.1"/>
</dbReference>
<dbReference type="RefSeq" id="XP_015147467.1">
    <property type="nucleotide sequence ID" value="XM_015291981.1"/>
</dbReference>
<dbReference type="RefSeq" id="XP_046780475.1">
    <molecule id="Q91044-1"/>
    <property type="nucleotide sequence ID" value="XM_046924519.1"/>
</dbReference>
<dbReference type="PDB" id="4PBV">
    <property type="method" value="X-ray"/>
    <property type="resolution" value="2.50 A"/>
    <property type="chains" value="A/B=32-302"/>
</dbReference>
<dbReference type="PDB" id="4PBW">
    <property type="method" value="X-ray"/>
    <property type="resolution" value="3.05 A"/>
    <property type="chains" value="A/B/C=32-302"/>
</dbReference>
<dbReference type="PDBsum" id="4PBV"/>
<dbReference type="PDBsum" id="4PBW"/>
<dbReference type="SMR" id="Q91044"/>
<dbReference type="FunCoup" id="Q91044">
    <property type="interactions" value="174"/>
</dbReference>
<dbReference type="STRING" id="9031.ENSGALP00000049680"/>
<dbReference type="GlyCosmos" id="Q91044">
    <property type="glycosylation" value="13 sites, No reported glycans"/>
</dbReference>
<dbReference type="GlyGen" id="Q91044">
    <property type="glycosylation" value="14 sites"/>
</dbReference>
<dbReference type="PaxDb" id="9031-ENSGALP00000010970"/>
<dbReference type="GeneID" id="396081"/>
<dbReference type="KEGG" id="gga:396081"/>
<dbReference type="CTD" id="4916"/>
<dbReference type="VEuPathDB" id="HostDB:geneid_396081"/>
<dbReference type="eggNOG" id="KOG1026">
    <property type="taxonomic scope" value="Eukaryota"/>
</dbReference>
<dbReference type="InParanoid" id="Q91044"/>
<dbReference type="OrthoDB" id="10005095at2759"/>
<dbReference type="PhylomeDB" id="Q91044"/>
<dbReference type="BRENDA" id="2.7.10.1">
    <property type="organism ID" value="1306"/>
</dbReference>
<dbReference type="Reactome" id="R-GGA-1257604">
    <property type="pathway name" value="PIP3 activates AKT signaling"/>
</dbReference>
<dbReference type="Reactome" id="R-GGA-388844">
    <property type="pathway name" value="Receptor-type tyrosine-protein phosphatases"/>
</dbReference>
<dbReference type="Reactome" id="R-GGA-6811558">
    <property type="pathway name" value="PI5P, PP2A and IER3 Regulate PI3K/AKT Signaling"/>
</dbReference>
<dbReference type="Reactome" id="R-GGA-9034013">
    <property type="pathway name" value="NTF3 activates NTRK3 signaling"/>
</dbReference>
<dbReference type="Reactome" id="R-GGA-9034793">
    <property type="pathway name" value="Activated NTRK3 signals through PLCG1"/>
</dbReference>
<dbReference type="Reactome" id="R-GGA-9603381">
    <property type="pathway name" value="Activated NTRK3 signals through PI3K"/>
</dbReference>
<dbReference type="EvolutionaryTrace" id="Q91044"/>
<dbReference type="PRO" id="PR:Q91044"/>
<dbReference type="Proteomes" id="UP000000539">
    <property type="component" value="Chromosome 10"/>
</dbReference>
<dbReference type="Bgee" id="ENSGALG00000040241">
    <property type="expression patterns" value="Expressed in brain and 10 other cell types or tissues"/>
</dbReference>
<dbReference type="GO" id="GO:0030424">
    <property type="term" value="C:axon"/>
    <property type="evidence" value="ECO:0000318"/>
    <property type="project" value="GO_Central"/>
</dbReference>
<dbReference type="GO" id="GO:0005886">
    <property type="term" value="C:plasma membrane"/>
    <property type="evidence" value="ECO:0000318"/>
    <property type="project" value="GO_Central"/>
</dbReference>
<dbReference type="GO" id="GO:0043235">
    <property type="term" value="C:receptor complex"/>
    <property type="evidence" value="ECO:0000318"/>
    <property type="project" value="GO_Central"/>
</dbReference>
<dbReference type="GO" id="GO:0005524">
    <property type="term" value="F:ATP binding"/>
    <property type="evidence" value="ECO:0007669"/>
    <property type="project" value="UniProtKB-KW"/>
</dbReference>
<dbReference type="GO" id="GO:0043121">
    <property type="term" value="F:neurotrophin binding"/>
    <property type="evidence" value="ECO:0000318"/>
    <property type="project" value="GO_Central"/>
</dbReference>
<dbReference type="GO" id="GO:0005030">
    <property type="term" value="F:neurotrophin receptor activity"/>
    <property type="evidence" value="ECO:0000318"/>
    <property type="project" value="GO_Central"/>
</dbReference>
<dbReference type="GO" id="GO:0004714">
    <property type="term" value="F:transmembrane receptor protein tyrosine kinase activity"/>
    <property type="evidence" value="ECO:0000318"/>
    <property type="project" value="GO_Central"/>
</dbReference>
<dbReference type="GO" id="GO:0030154">
    <property type="term" value="P:cell differentiation"/>
    <property type="evidence" value="ECO:0007669"/>
    <property type="project" value="UniProtKB-KW"/>
</dbReference>
<dbReference type="GO" id="GO:0007169">
    <property type="term" value="P:cell surface receptor protein tyrosine kinase signaling pathway"/>
    <property type="evidence" value="ECO:0000318"/>
    <property type="project" value="GO_Central"/>
</dbReference>
<dbReference type="GO" id="GO:1990090">
    <property type="term" value="P:cellular response to nerve growth factor stimulus"/>
    <property type="evidence" value="ECO:0000318"/>
    <property type="project" value="GO_Central"/>
</dbReference>
<dbReference type="GO" id="GO:0007507">
    <property type="term" value="P:heart development"/>
    <property type="evidence" value="ECO:0000250"/>
    <property type="project" value="UniProtKB"/>
</dbReference>
<dbReference type="GO" id="GO:0007399">
    <property type="term" value="P:nervous system development"/>
    <property type="evidence" value="ECO:0007669"/>
    <property type="project" value="UniProtKB-KW"/>
</dbReference>
<dbReference type="GO" id="GO:0010976">
    <property type="term" value="P:positive regulation of neuron projection development"/>
    <property type="evidence" value="ECO:0000318"/>
    <property type="project" value="GO_Central"/>
</dbReference>
<dbReference type="GO" id="GO:0051897">
    <property type="term" value="P:positive regulation of phosphatidylinositol 3-kinase/protein kinase B signal transduction"/>
    <property type="evidence" value="ECO:0000318"/>
    <property type="project" value="GO_Central"/>
</dbReference>
<dbReference type="CDD" id="cd05094">
    <property type="entry name" value="PTKc_TrkC"/>
    <property type="match status" value="1"/>
</dbReference>
<dbReference type="FunFam" id="1.10.510.10:FF:000701">
    <property type="entry name" value="Tyrosine-protein kinase receptor"/>
    <property type="match status" value="1"/>
</dbReference>
<dbReference type="FunFam" id="2.60.40.10:FF:000251">
    <property type="entry name" value="Tyrosine-protein kinase receptor"/>
    <property type="match status" value="1"/>
</dbReference>
<dbReference type="FunFam" id="2.60.40.10:FF:000265">
    <property type="entry name" value="Tyrosine-protein kinase receptor"/>
    <property type="match status" value="1"/>
</dbReference>
<dbReference type="FunFam" id="3.30.200.20:FF:000033">
    <property type="entry name" value="Tyrosine-protein kinase receptor"/>
    <property type="match status" value="1"/>
</dbReference>
<dbReference type="FunFam" id="3.80.10.10:FF:000035">
    <property type="entry name" value="Tyrosine-protein kinase receptor"/>
    <property type="match status" value="1"/>
</dbReference>
<dbReference type="Gene3D" id="2.60.40.10">
    <property type="entry name" value="Immunoglobulins"/>
    <property type="match status" value="2"/>
</dbReference>
<dbReference type="Gene3D" id="3.30.200.20">
    <property type="entry name" value="Phosphorylase Kinase, domain 1"/>
    <property type="match status" value="1"/>
</dbReference>
<dbReference type="Gene3D" id="3.80.10.10">
    <property type="entry name" value="Ribonuclease Inhibitor"/>
    <property type="match status" value="1"/>
</dbReference>
<dbReference type="Gene3D" id="1.10.510.10">
    <property type="entry name" value="Transferase(Phosphotransferase) domain 1"/>
    <property type="match status" value="1"/>
</dbReference>
<dbReference type="InterPro" id="IPR000483">
    <property type="entry name" value="Cys-rich_flank_reg_C"/>
</dbReference>
<dbReference type="InterPro" id="IPR007110">
    <property type="entry name" value="Ig-like_dom"/>
</dbReference>
<dbReference type="InterPro" id="IPR036179">
    <property type="entry name" value="Ig-like_dom_sf"/>
</dbReference>
<dbReference type="InterPro" id="IPR013783">
    <property type="entry name" value="Ig-like_fold"/>
</dbReference>
<dbReference type="InterPro" id="IPR013098">
    <property type="entry name" value="Ig_I-set"/>
</dbReference>
<dbReference type="InterPro" id="IPR003599">
    <property type="entry name" value="Ig_sub"/>
</dbReference>
<dbReference type="InterPro" id="IPR013151">
    <property type="entry name" value="Immunoglobulin_dom"/>
</dbReference>
<dbReference type="InterPro" id="IPR011009">
    <property type="entry name" value="Kinase-like_dom_sf"/>
</dbReference>
<dbReference type="InterPro" id="IPR001611">
    <property type="entry name" value="Leu-rich_rpt"/>
</dbReference>
<dbReference type="InterPro" id="IPR032675">
    <property type="entry name" value="LRR_dom_sf"/>
</dbReference>
<dbReference type="InterPro" id="IPR020777">
    <property type="entry name" value="NTRK"/>
</dbReference>
<dbReference type="InterPro" id="IPR020446">
    <property type="entry name" value="NTRK3"/>
</dbReference>
<dbReference type="InterPro" id="IPR031635">
    <property type="entry name" value="NTRK_LRRCT"/>
</dbReference>
<dbReference type="InterPro" id="IPR000719">
    <property type="entry name" value="Prot_kinase_dom"/>
</dbReference>
<dbReference type="InterPro" id="IPR017441">
    <property type="entry name" value="Protein_kinase_ATP_BS"/>
</dbReference>
<dbReference type="InterPro" id="IPR050122">
    <property type="entry name" value="RTK"/>
</dbReference>
<dbReference type="InterPro" id="IPR001245">
    <property type="entry name" value="Ser-Thr/Tyr_kinase_cat_dom"/>
</dbReference>
<dbReference type="InterPro" id="IPR008266">
    <property type="entry name" value="Tyr_kinase_AS"/>
</dbReference>
<dbReference type="InterPro" id="IPR020635">
    <property type="entry name" value="Tyr_kinase_cat_dom"/>
</dbReference>
<dbReference type="InterPro" id="IPR002011">
    <property type="entry name" value="Tyr_kinase_rcpt_2_CS"/>
</dbReference>
<dbReference type="PANTHER" id="PTHR24416:SF66">
    <property type="entry name" value="NT-3 GROWTH FACTOR RECEPTOR"/>
    <property type="match status" value="1"/>
</dbReference>
<dbReference type="PANTHER" id="PTHR24416">
    <property type="entry name" value="TYROSINE-PROTEIN KINASE RECEPTOR"/>
    <property type="match status" value="1"/>
</dbReference>
<dbReference type="Pfam" id="PF07679">
    <property type="entry name" value="I-set"/>
    <property type="match status" value="1"/>
</dbReference>
<dbReference type="Pfam" id="PF00047">
    <property type="entry name" value="ig"/>
    <property type="match status" value="1"/>
</dbReference>
<dbReference type="Pfam" id="PF13855">
    <property type="entry name" value="LRR_8"/>
    <property type="match status" value="1"/>
</dbReference>
<dbReference type="Pfam" id="PF16920">
    <property type="entry name" value="LRRCT_2"/>
    <property type="match status" value="1"/>
</dbReference>
<dbReference type="Pfam" id="PF07714">
    <property type="entry name" value="PK_Tyr_Ser-Thr"/>
    <property type="match status" value="1"/>
</dbReference>
<dbReference type="PRINTS" id="PR01939">
    <property type="entry name" value="NTKRECEPTOR"/>
</dbReference>
<dbReference type="PRINTS" id="PR01942">
    <property type="entry name" value="NTKRECEPTOR3"/>
</dbReference>
<dbReference type="PRINTS" id="PR00109">
    <property type="entry name" value="TYRKINASE"/>
</dbReference>
<dbReference type="SMART" id="SM00409">
    <property type="entry name" value="IG"/>
    <property type="match status" value="1"/>
</dbReference>
<dbReference type="SMART" id="SM00082">
    <property type="entry name" value="LRRCT"/>
    <property type="match status" value="1"/>
</dbReference>
<dbReference type="SMART" id="SM00219">
    <property type="entry name" value="TyrKc"/>
    <property type="match status" value="1"/>
</dbReference>
<dbReference type="SUPFAM" id="SSF48726">
    <property type="entry name" value="Immunoglobulin"/>
    <property type="match status" value="2"/>
</dbReference>
<dbReference type="SUPFAM" id="SSF52058">
    <property type="entry name" value="L domain-like"/>
    <property type="match status" value="1"/>
</dbReference>
<dbReference type="SUPFAM" id="SSF56112">
    <property type="entry name" value="Protein kinase-like (PK-like)"/>
    <property type="match status" value="1"/>
</dbReference>
<dbReference type="PROSITE" id="PS50835">
    <property type="entry name" value="IG_LIKE"/>
    <property type="match status" value="1"/>
</dbReference>
<dbReference type="PROSITE" id="PS51450">
    <property type="entry name" value="LRR"/>
    <property type="match status" value="1"/>
</dbReference>
<dbReference type="PROSITE" id="PS00107">
    <property type="entry name" value="PROTEIN_KINASE_ATP"/>
    <property type="match status" value="1"/>
</dbReference>
<dbReference type="PROSITE" id="PS50011">
    <property type="entry name" value="PROTEIN_KINASE_DOM"/>
    <property type="match status" value="1"/>
</dbReference>
<dbReference type="PROSITE" id="PS00109">
    <property type="entry name" value="PROTEIN_KINASE_TYR"/>
    <property type="match status" value="1"/>
</dbReference>
<dbReference type="PROSITE" id="PS00239">
    <property type="entry name" value="RECEPTOR_TYR_KIN_II"/>
    <property type="match status" value="1"/>
</dbReference>
<organism>
    <name type="scientific">Gallus gallus</name>
    <name type="common">Chicken</name>
    <dbReference type="NCBI Taxonomy" id="9031"/>
    <lineage>
        <taxon>Eukaryota</taxon>
        <taxon>Metazoa</taxon>
        <taxon>Chordata</taxon>
        <taxon>Craniata</taxon>
        <taxon>Vertebrata</taxon>
        <taxon>Euteleostomi</taxon>
        <taxon>Archelosauria</taxon>
        <taxon>Archosauria</taxon>
        <taxon>Dinosauria</taxon>
        <taxon>Saurischia</taxon>
        <taxon>Theropoda</taxon>
        <taxon>Coelurosauria</taxon>
        <taxon>Aves</taxon>
        <taxon>Neognathae</taxon>
        <taxon>Galloanserae</taxon>
        <taxon>Galliformes</taxon>
        <taxon>Phasianidae</taxon>
        <taxon>Phasianinae</taxon>
        <taxon>Gallus</taxon>
    </lineage>
</organism>
<reference key="1">
    <citation type="journal article" date="1994" name="Neuron">
        <title>Isoforms of the avian TrkC receptor: a novel kinase insertion dissociates transformation and process outgrowth from survival.</title>
        <authorList>
            <person name="Garner A.S."/>
            <person name="Large T.H."/>
        </authorList>
    </citation>
    <scope>NUCLEOTIDE SEQUENCE [MRNA] (ISOFORMS ALPHA-FL; ALPHA-KT; ALPHA-KD; BETA-KD AND KI25)</scope>
    <scope>FUNCTION</scope>
    <source>
        <tissue>Embryonic brain</tissue>
    </source>
</reference>
<reference key="2">
    <citation type="journal article" date="1993" name="FEBS Lett.">
        <title>Molecular cloning and expression of a novel truncated form of chicken trkC.</title>
        <authorList>
            <person name="Okazawa H."/>
            <person name="Kamei M."/>
            <person name="Kanazawa I."/>
        </authorList>
    </citation>
    <scope>NUCLEOTIDE SEQUENCE [MRNA] (ISOFORMS ALPHA-FL AND TRKC-3)</scope>
</reference>
<reference key="3">
    <citation type="journal article" date="1993" name="Brain Res. Dev. Brain Res.">
        <title>Molecular cloning and cellular localization of trkC in the chicken embryo.</title>
        <authorList>
            <person name="Williams R."/>
            <person name="Backstrom A."/>
            <person name="Ebendal T."/>
            <person name="Hallboeoek F."/>
        </authorList>
    </citation>
    <scope>NUCLEOTIDE SEQUENCE [MRNA] OF 378-513</scope>
    <source>
        <tissue>Embryo</tissue>
    </source>
</reference>
<reference key="4">
    <citation type="journal article" date="2007" name="Biochim. Biophys. Acta">
        <title>PTPsigma binds and dephosphorylates neurotrophin receptors and can suppress NGF-dependent neurite outgrowth from sensory neurons.</title>
        <authorList>
            <person name="Faux C."/>
            <person name="Hawadle M."/>
            <person name="Nixon J."/>
            <person name="Wallace A."/>
            <person name="Lee S."/>
            <person name="Murray S."/>
            <person name="Stoker A."/>
        </authorList>
    </citation>
    <scope>INTERACTION WITH PTPRS</scope>
</reference>
<reference evidence="13 14" key="5">
    <citation type="journal article" date="2014" name="Nat. Commun.">
        <title>Structural basis for extracellular cis and trans RPTPsigma signal competition in synaptogenesis.</title>
        <authorList>
            <person name="Coles C.H."/>
            <person name="Mitakidis N."/>
            <person name="Zhang P."/>
            <person name="Elegheert J."/>
            <person name="Lu W."/>
            <person name="Stoker A.W."/>
            <person name="Nakagawa T."/>
            <person name="Craig A.M."/>
            <person name="Jones E.Y."/>
            <person name="Aricescu A.R."/>
        </authorList>
    </citation>
    <scope>X-RAY CRYSTALLOGRAPHY (2.50 ANGSTROMS) OF 32-302 IN COMPLEX WITH PTPRS</scope>
    <scope>GLYCOSYLATION AT ASN-79; ASN-203 AND ASN-272</scope>
    <scope>DISULFIDE BONDS</scope>
</reference>
<proteinExistence type="evidence at protein level"/>
<name>NTRK3_CHICK</name>
<comment type="function">
    <text evidence="2 9">Receptor tyrosine kinase involved in nervous system and probably heart development. Upon binding of its ligand NTF3/neurotrophin-3, NTRK3 autophosphorylates and activates different signaling pathways, including the phosphatidylinositol 3-kinase/AKT and the MAPK pathways, that control cell survival and differentiation (By similarity). The KT and KD isoforms fail to stimulate transformation, process outgrowth or survival. Isoform KI25 exhibits tyrosine phosphorylation in the absence of ligand and is unable to mediate survival of neuronal cells (PubMed:8060621).</text>
</comment>
<comment type="catalytic activity">
    <reaction evidence="6">
        <text>L-tyrosyl-[protein] + ATP = O-phospho-L-tyrosyl-[protein] + ADP + H(+)</text>
        <dbReference type="Rhea" id="RHEA:10596"/>
        <dbReference type="Rhea" id="RHEA-COMP:10136"/>
        <dbReference type="Rhea" id="RHEA-COMP:20101"/>
        <dbReference type="ChEBI" id="CHEBI:15378"/>
        <dbReference type="ChEBI" id="CHEBI:30616"/>
        <dbReference type="ChEBI" id="CHEBI:46858"/>
        <dbReference type="ChEBI" id="CHEBI:61978"/>
        <dbReference type="ChEBI" id="CHEBI:456216"/>
        <dbReference type="EC" id="2.7.10.1"/>
    </reaction>
</comment>
<comment type="subunit">
    <text evidence="1 7 8">Exists in a dynamic equilibrium between monomeric (low affinity) and dimeric (high affinity) structures (By similarity). Interacts with PTPRS (PubMed:17967490, PubMed:25385546).</text>
</comment>
<comment type="subcellular location">
    <subcellularLocation>
        <location>Membrane</location>
        <topology>Single-pass type I membrane protein</topology>
    </subcellularLocation>
</comment>
<comment type="alternative products">
    <event type="alternative splicing"/>
    <isoform>
        <id>Q91044-1</id>
        <name>Alpha-FL</name>
        <sequence type="displayed"/>
    </isoform>
    <isoform>
        <id>Q91044-2</id>
        <name>Alpha-KT</name>
        <sequence type="described" ref="VSP_002943 VSP_002944"/>
    </isoform>
    <isoform>
        <id>Q91044-3</id>
        <name>Alpha-KD</name>
        <sequence type="described" ref="VSP_002939 VSP_002940"/>
    </isoform>
    <isoform>
        <id>Q91044-4</id>
        <name>Beta-KD</name>
        <sequence type="described" ref="VSP_002938 VSP_002939 VSP_002940"/>
    </isoform>
    <isoform>
        <id>Q91044-5</id>
        <name>TRKC-3</name>
        <sequence type="described" ref="VSP_002941 VSP_002942"/>
    </isoform>
    <isoform>
        <id>Q91044-6</id>
        <name>KI25</name>
        <sequence type="described" ref="VSP_002945"/>
    </isoform>
    <text>Additional isoforms seem to exist.</text>
</comment>
<comment type="developmental stage">
    <text>Expression occurs in the 2 dpc embryo with increasing levels later in development. In the 9 dpc embryo highest levels are found in brain and spinal cord with intermediate levels in eye, heart, gut and muscle. Low levels are found in kidney, liver, skin and yolk sac.</text>
</comment>
<comment type="PTM">
    <text evidence="1">Ligand-mediated auto-phosphorylation.</text>
</comment>
<comment type="miscellaneous">
    <molecule>Isoform TRKC-3</molecule>
    <text evidence="12">The kinase domain is of 19 aa instead of 39aa in the isoform alpha-KD due to a frameshift.</text>
</comment>
<comment type="similarity">
    <text evidence="5">Belongs to the protein kinase superfamily. Tyr protein kinase family. Insulin receptor subfamily.</text>
</comment>
<accession>Q91044</accession>
<accession>Q91011</accession>
<accession>Q92022</accession>
<protein>
    <recommendedName>
        <fullName>NT-3 growth factor receptor</fullName>
        <ecNumber>2.7.10.1</ecNumber>
    </recommendedName>
    <alternativeName>
        <fullName>Neurotrophic tyrosine kinase receptor type 3</fullName>
    </alternativeName>
    <alternativeName>
        <fullName>TrkC tyrosine kinase</fullName>
        <shortName>Trk-C</shortName>
    </alternativeName>
</protein>
<keyword id="KW-0002">3D-structure</keyword>
<keyword id="KW-0025">Alternative splicing</keyword>
<keyword id="KW-0067">ATP-binding</keyword>
<keyword id="KW-0217">Developmental protein</keyword>
<keyword id="KW-0221">Differentiation</keyword>
<keyword id="KW-1015">Disulfide bond</keyword>
<keyword id="KW-0325">Glycoprotein</keyword>
<keyword id="KW-0393">Immunoglobulin domain</keyword>
<keyword id="KW-0418">Kinase</keyword>
<keyword id="KW-0433">Leucine-rich repeat</keyword>
<keyword id="KW-0472">Membrane</keyword>
<keyword id="KW-0524">Neurogenesis</keyword>
<keyword id="KW-0547">Nucleotide-binding</keyword>
<keyword id="KW-0597">Phosphoprotein</keyword>
<keyword id="KW-0675">Receptor</keyword>
<keyword id="KW-1185">Reference proteome</keyword>
<keyword id="KW-0677">Repeat</keyword>
<keyword id="KW-0732">Signal</keyword>
<keyword id="KW-0808">Transferase</keyword>
<keyword id="KW-0812">Transmembrane</keyword>
<keyword id="KW-1133">Transmembrane helix</keyword>
<keyword id="KW-0829">Tyrosine-protein kinase</keyword>
<sequence>MDVSLCPTKCTFWRVFLLWSIWGDYLLSVLACPANCLCSKTDINCKKPDDGNLFPLLEGQDSGSSNGNTSINITDISRNITSIHIENWKNLQTLNAVDMELYTGLQRLTIRNSGLRNIQPRAFAKNPHLRYIDLSGNRLTTLSWQLFQTLRLFDLRLERNPFNCSCDIRWIQLWQEKGEANLQSQQLHCMNLDTAVILLRNMNITQCDLPEISVSHVNLTVREGENAVITCNGSGSPLPDVDWTVADLHSINTHQTNLNWTNVHAINLTLVNVTSEDNGFLLTCIAENVVGMSNASVLLTVYYPPRILTLEEPVLHLEHCIAFAVHGNPAPTLHWLHNGQVLRETEIIHMEFYQQGEVSEGCLLFNKPTHYNNGNYTIVATNQLGSANQTIKGHFLEKPFPESTDNFVSIGDYEVSPTPPITVTHKPEEDTFGVSIAVGLAAFACVLLVVLFIMINKYGRRSKFGMKGPVAVISGEEDSASPLHHINHGITTPSSLDAGPDTVVIGMTRIPVIENPQYFRQGHNCHKPDTYVQHIKRRDIVLKRELGEGAFGKVFLAECYNLSPTNDKMLVAVKALKDPTLAARKDFQREAELLTNLQHEHIVKFYGVCGDGDPLIMVFEYMKHGDLNKFLRAHGPDAMILVDGQPRQAKGELGLSQMLHIASQIASGMVYLASQHFVHRDLATRNCLVGANLLVKIGDFGMSRDVYSTDYYRVGGHTMLPIRWMPPESIMYRKFTTESDVWSFGVILWEIFTYGKQPWFQLSNTEVIECITQGRVLERPRVCPKEVYDIMLGCWQREPQQRLNIKEIYKILHALGKATPIYLDILG</sequence>